<proteinExistence type="evidence at transcript level"/>
<feature type="chain" id="PRO_0000430302" description="HTH-type transcriptional regulator TsaQ1/TsaQ2">
    <location>
        <begin position="1"/>
        <end position="278"/>
    </location>
</feature>
<feature type="domain" description="HTH iclR-type" evidence="1">
    <location>
        <begin position="19"/>
        <end position="80"/>
    </location>
</feature>
<feature type="domain" description="IclR-ED" evidence="2">
    <location>
        <begin position="95"/>
        <end position="266"/>
    </location>
</feature>
<feature type="DNA-binding region" description="H-T-H motif" evidence="1">
    <location>
        <begin position="40"/>
        <end position="59"/>
    </location>
</feature>
<dbReference type="EMBL" id="AH010657">
    <property type="protein sequence ID" value="AAP69991.1"/>
    <property type="molecule type" value="Genomic_DNA"/>
</dbReference>
<dbReference type="EMBL" id="AH010657">
    <property type="protein sequence ID" value="AAP69994.1"/>
    <property type="molecule type" value="Genomic_DNA"/>
</dbReference>
<dbReference type="SMR" id="Q6XL52"/>
<dbReference type="GO" id="GO:0003677">
    <property type="term" value="F:DNA binding"/>
    <property type="evidence" value="ECO:0007669"/>
    <property type="project" value="UniProtKB-KW"/>
</dbReference>
<dbReference type="GO" id="GO:0003700">
    <property type="term" value="F:DNA-binding transcription factor activity"/>
    <property type="evidence" value="ECO:0007669"/>
    <property type="project" value="TreeGrafter"/>
</dbReference>
<dbReference type="GO" id="GO:0045892">
    <property type="term" value="P:negative regulation of DNA-templated transcription"/>
    <property type="evidence" value="ECO:0007669"/>
    <property type="project" value="TreeGrafter"/>
</dbReference>
<dbReference type="Gene3D" id="3.30.450.40">
    <property type="match status" value="1"/>
</dbReference>
<dbReference type="Gene3D" id="1.10.10.10">
    <property type="entry name" value="Winged helix-like DNA-binding domain superfamily/Winged helix DNA-binding domain"/>
    <property type="match status" value="1"/>
</dbReference>
<dbReference type="InterPro" id="IPR029016">
    <property type="entry name" value="GAF-like_dom_sf"/>
</dbReference>
<dbReference type="InterPro" id="IPR050707">
    <property type="entry name" value="HTH_MetabolicPath_Reg"/>
</dbReference>
<dbReference type="InterPro" id="IPR014757">
    <property type="entry name" value="Tscrpt_reg_IclR_C"/>
</dbReference>
<dbReference type="InterPro" id="IPR005471">
    <property type="entry name" value="Tscrpt_reg_IclR_N"/>
</dbReference>
<dbReference type="InterPro" id="IPR036388">
    <property type="entry name" value="WH-like_DNA-bd_sf"/>
</dbReference>
<dbReference type="InterPro" id="IPR036390">
    <property type="entry name" value="WH_DNA-bd_sf"/>
</dbReference>
<dbReference type="PANTHER" id="PTHR30136">
    <property type="entry name" value="HELIX-TURN-HELIX TRANSCRIPTIONAL REGULATOR, ICLR FAMILY"/>
    <property type="match status" value="1"/>
</dbReference>
<dbReference type="PANTHER" id="PTHR30136:SF33">
    <property type="entry name" value="TRANSCRIPTIONAL REGULATORY PROTEIN"/>
    <property type="match status" value="1"/>
</dbReference>
<dbReference type="Pfam" id="PF09339">
    <property type="entry name" value="HTH_IclR"/>
    <property type="match status" value="1"/>
</dbReference>
<dbReference type="Pfam" id="PF01614">
    <property type="entry name" value="IclR_C"/>
    <property type="match status" value="1"/>
</dbReference>
<dbReference type="SMART" id="SM00346">
    <property type="entry name" value="HTH_ICLR"/>
    <property type="match status" value="1"/>
</dbReference>
<dbReference type="SUPFAM" id="SSF55781">
    <property type="entry name" value="GAF domain-like"/>
    <property type="match status" value="1"/>
</dbReference>
<dbReference type="SUPFAM" id="SSF46785">
    <property type="entry name" value="Winged helix' DNA-binding domain"/>
    <property type="match status" value="1"/>
</dbReference>
<dbReference type="PROSITE" id="PS51077">
    <property type="entry name" value="HTH_ICLR"/>
    <property type="match status" value="1"/>
</dbReference>
<dbReference type="PROSITE" id="PS51078">
    <property type="entry name" value="ICLR_ED"/>
    <property type="match status" value="1"/>
</dbReference>
<organism>
    <name type="scientific">Comamonas testosteroni</name>
    <name type="common">Pseudomonas testosteroni</name>
    <dbReference type="NCBI Taxonomy" id="285"/>
    <lineage>
        <taxon>Bacteria</taxon>
        <taxon>Pseudomonadati</taxon>
        <taxon>Pseudomonadota</taxon>
        <taxon>Betaproteobacteria</taxon>
        <taxon>Burkholderiales</taxon>
        <taxon>Comamonadaceae</taxon>
        <taxon>Comamonas</taxon>
    </lineage>
</organism>
<evidence type="ECO:0000255" key="1">
    <source>
        <dbReference type="PROSITE-ProRule" id="PRU00393"/>
    </source>
</evidence>
<evidence type="ECO:0000255" key="2">
    <source>
        <dbReference type="PROSITE-ProRule" id="PRU00394"/>
    </source>
</evidence>
<evidence type="ECO:0000269" key="3">
    <source>
    </source>
</evidence>
<keyword id="KW-0238">DNA-binding</keyword>
<keyword id="KW-0614">Plasmid</keyword>
<keyword id="KW-0804">Transcription</keyword>
<keyword id="KW-0805">Transcription regulation</keyword>
<comment type="function">
    <text evidence="3">Both copies function as additional regulators for the tsa locus, specifically for tsaT.</text>
</comment>
<comment type="induction">
    <text evidence="3">Induced by p-toluenesulfonate (TSA), p-toluenecarboxylate (TCA) and p-sulfobenzoate (PSB).</text>
</comment>
<comment type="disruption phenotype">
    <text evidence="3">When both copies are inactivated, the mutants are unable to grow with TSA, but show normal growth with TCA. Growth with PSB is slightly faster than growth of the wild-type strain.</text>
</comment>
<reference key="1">
    <citation type="journal article" date="2001" name="Appl. Environ. Microbiol.">
        <title>Map of the IncP1beta plasmid pTSA encoding the widespread genes (tsa) for p-toluenesulfonate degradation in Comamonas testosteroni T-2.</title>
        <authorList>
            <person name="Tralau T."/>
            <person name="Cook A.M."/>
            <person name="Ruff J."/>
        </authorList>
    </citation>
    <scope>NUCLEOTIDE SEQUENCE [GENOMIC DNA]</scope>
    <source>
        <strain>DSM 6577 / T-2</strain>
    </source>
</reference>
<reference key="2">
    <citation type="journal article" date="2003" name="Arch. Microbiol.">
        <title>An additional regulator, TsaQ, is involved with TsaR in regulation of transport during the degradation of p-toluenesulfonate in Comamonas testosteroni T-2.</title>
        <authorList>
            <person name="Tralau T."/>
            <person name="Cook A.M."/>
            <person name="Ruff J."/>
        </authorList>
    </citation>
    <scope>NUCLEOTIDE SEQUENCE [GENOMIC DNA]</scope>
    <scope>FUNCTION</scope>
    <scope>INDUCTION</scope>
    <scope>DISRUPTION PHENOTYPE</scope>
    <source>
        <strain>DSM 6577 / T-2</strain>
    </source>
</reference>
<name>TSAQ_COMTE</name>
<sequence length="278" mass="30460">MATHVKTPDQLQESGTGLVHSLAKGLEILSCFSEGELLGNQQLVELTGLPKATVSRLTSTLVKLGYLQVDPRSRKLAMGARVLGLGVSVQRKLGLQRIARPHMEALSQRFGLTVTMGTRDRLSVVLLEVCRPPSLAQLVVNFDAGTHMPLSQTALGLASLVNSPVKDREQVIEGLRKQLGDQWVEARNRIERAHQEHERYGYIVSQRSLGRDVSGVAVGMVPMGSNTPYVFHMAGPSNQMPLSLMRSDMGPALKQMVQDIQAEMRAARPPKLVVPKEF</sequence>
<protein>
    <recommendedName>
        <fullName>HTH-type transcriptional regulator TsaQ1/TsaQ2</fullName>
    </recommendedName>
</protein>
<accession>Q6XL52</accession>
<geneLocation type="plasmid">
    <name>pTSA</name>
</geneLocation>
<gene>
    <name type="primary">tsaQ1</name>
</gene>
<gene>
    <name type="primary">tsaQ2</name>
</gene>